<dbReference type="EMBL" id="L31940">
    <property type="protein sequence ID" value="AAA74958.1"/>
    <property type="molecule type" value="mRNA"/>
</dbReference>
<dbReference type="PIR" id="T14387">
    <property type="entry name" value="T14387"/>
</dbReference>
<dbReference type="FunCoup" id="Q39269">
    <property type="interactions" value="101"/>
</dbReference>
<dbReference type="STRING" id="51351.Q39269"/>
<dbReference type="eggNOG" id="KOG4738">
    <property type="taxonomic scope" value="Eukaryota"/>
</dbReference>
<dbReference type="InParanoid" id="Q39269"/>
<dbReference type="GO" id="GO:0046872">
    <property type="term" value="F:metal ion binding"/>
    <property type="evidence" value="ECO:0007669"/>
    <property type="project" value="UniProtKB-KW"/>
</dbReference>
<dbReference type="InterPro" id="IPR000347">
    <property type="entry name" value="Metalthion_15p"/>
</dbReference>
<dbReference type="PANTHER" id="PTHR33543">
    <property type="entry name" value="METALLOTHIONEIN-LIKE PROTEIN 2A"/>
    <property type="match status" value="1"/>
</dbReference>
<dbReference type="PANTHER" id="PTHR33543:SF36">
    <property type="entry name" value="METALLOTHIONEIN-LIKE PROTEIN 2A"/>
    <property type="match status" value="1"/>
</dbReference>
<dbReference type="Pfam" id="PF01439">
    <property type="entry name" value="Metallothio_2"/>
    <property type="match status" value="1"/>
</dbReference>
<evidence type="ECO:0000305" key="1"/>
<proteinExistence type="inferred from homology"/>
<organism>
    <name type="scientific">Brassica rapa subsp. pekinensis</name>
    <name type="common">Chinese cabbage</name>
    <name type="synonym">Brassica pekinensis</name>
    <dbReference type="NCBI Taxonomy" id="51351"/>
    <lineage>
        <taxon>Eukaryota</taxon>
        <taxon>Viridiplantae</taxon>
        <taxon>Streptophyta</taxon>
        <taxon>Embryophyta</taxon>
        <taxon>Tracheophyta</taxon>
        <taxon>Spermatophyta</taxon>
        <taxon>Magnoliopsida</taxon>
        <taxon>eudicotyledons</taxon>
        <taxon>Gunneridae</taxon>
        <taxon>Pentapetalae</taxon>
        <taxon>rosids</taxon>
        <taxon>malvids</taxon>
        <taxon>Brassicales</taxon>
        <taxon>Brassicaceae</taxon>
        <taxon>Brassiceae</taxon>
        <taxon>Brassica</taxon>
    </lineage>
</organism>
<protein>
    <recommendedName>
        <fullName>Metallothionein-like protein BIF98</fullName>
    </recommendedName>
</protein>
<feature type="chain" id="PRO_0000197394" description="Metallothionein-like protein BIF98">
    <location>
        <begin position="1"/>
        <end position="80"/>
    </location>
</feature>
<name>MT2_BRARP</name>
<keyword id="KW-0479">Metal-binding</keyword>
<keyword id="KW-0480">Metal-thiolate cluster</keyword>
<comment type="function">
    <text>Metallothioneins have a high content of cysteine residues that bind various heavy metals.</text>
</comment>
<comment type="similarity">
    <text evidence="1">Belongs to the metallothionein superfamily. Type 15 family.</text>
</comment>
<sequence length="80" mass="8109">MSCCGGNCGCGSGCKCGNGCGGCKMYPDLGFSGESTTTETFVFGVAPAMKNQYEASGEGVAENDRCKCGSDCKCDPCTCK</sequence>
<reference key="1">
    <citation type="journal article" date="1995" name="Plant Physiol.">
        <title>Nucleotide sequence of cDNA clone encoding a metallothionein-like protein from Chinese cabbage.</title>
        <authorList>
            <person name="Kim H.U."/>
            <person name="Kim J.B."/>
            <person name="Yun C.H."/>
            <person name="Kang S.K."/>
            <person name="Chung T.Y."/>
        </authorList>
    </citation>
    <scope>NUCLEOTIDE SEQUENCE [MRNA]</scope>
    <source>
        <tissue>Flower</tissue>
    </source>
</reference>
<accession>Q39269</accession>